<proteinExistence type="inferred from homology"/>
<keyword id="KW-1185">Reference proteome</keyword>
<keyword id="KW-0687">Ribonucleoprotein</keyword>
<keyword id="KW-0689">Ribosomal protein</keyword>
<sequence length="147" mass="16325">MRTTFLAKPGEIEKKWYIIDAKDVVLGRLSTVVASILRGKNKPTFTPNVDMGDNVIIINASEVKLTGKKATDKVYYHHSNHPGGLKARTAGNYREFNPEKLLELSIHGMLPKNTLGRKQGLNLHVYAGSEHDHAAQKPEALDINKLV</sequence>
<feature type="chain" id="PRO_1000055402" description="Large ribosomal subunit protein uL13">
    <location>
        <begin position="1"/>
        <end position="147"/>
    </location>
</feature>
<accession>Q03ZL1</accession>
<comment type="function">
    <text evidence="1">This protein is one of the early assembly proteins of the 50S ribosomal subunit, although it is not seen to bind rRNA by itself. It is important during the early stages of 50S assembly.</text>
</comment>
<comment type="subunit">
    <text evidence="1">Part of the 50S ribosomal subunit.</text>
</comment>
<comment type="similarity">
    <text evidence="1">Belongs to the universal ribosomal protein uL13 family.</text>
</comment>
<protein>
    <recommendedName>
        <fullName evidence="1">Large ribosomal subunit protein uL13</fullName>
    </recommendedName>
    <alternativeName>
        <fullName evidence="2">50S ribosomal protein L13</fullName>
    </alternativeName>
</protein>
<name>RL13_LEUMM</name>
<gene>
    <name evidence="1" type="primary">rplM</name>
    <name type="ordered locus">LEUM_0230</name>
</gene>
<evidence type="ECO:0000255" key="1">
    <source>
        <dbReference type="HAMAP-Rule" id="MF_01366"/>
    </source>
</evidence>
<evidence type="ECO:0000305" key="2"/>
<dbReference type="EMBL" id="CP000414">
    <property type="protein sequence ID" value="ABJ61361.1"/>
    <property type="molecule type" value="Genomic_DNA"/>
</dbReference>
<dbReference type="RefSeq" id="WP_002815997.1">
    <property type="nucleotide sequence ID" value="NC_008531.1"/>
</dbReference>
<dbReference type="SMR" id="Q03ZL1"/>
<dbReference type="EnsemblBacteria" id="ABJ61361">
    <property type="protein sequence ID" value="ABJ61361"/>
    <property type="gene ID" value="LEUM_0230"/>
</dbReference>
<dbReference type="GeneID" id="97504947"/>
<dbReference type="KEGG" id="lme:LEUM_0230"/>
<dbReference type="eggNOG" id="COG0102">
    <property type="taxonomic scope" value="Bacteria"/>
</dbReference>
<dbReference type="HOGENOM" id="CLU_082184_2_1_9"/>
<dbReference type="Proteomes" id="UP000000362">
    <property type="component" value="Chromosome"/>
</dbReference>
<dbReference type="GO" id="GO:0022625">
    <property type="term" value="C:cytosolic large ribosomal subunit"/>
    <property type="evidence" value="ECO:0007669"/>
    <property type="project" value="TreeGrafter"/>
</dbReference>
<dbReference type="GO" id="GO:0003729">
    <property type="term" value="F:mRNA binding"/>
    <property type="evidence" value="ECO:0007669"/>
    <property type="project" value="TreeGrafter"/>
</dbReference>
<dbReference type="GO" id="GO:0003735">
    <property type="term" value="F:structural constituent of ribosome"/>
    <property type="evidence" value="ECO:0007669"/>
    <property type="project" value="InterPro"/>
</dbReference>
<dbReference type="GO" id="GO:0017148">
    <property type="term" value="P:negative regulation of translation"/>
    <property type="evidence" value="ECO:0007669"/>
    <property type="project" value="TreeGrafter"/>
</dbReference>
<dbReference type="GO" id="GO:0006412">
    <property type="term" value="P:translation"/>
    <property type="evidence" value="ECO:0007669"/>
    <property type="project" value="UniProtKB-UniRule"/>
</dbReference>
<dbReference type="CDD" id="cd00392">
    <property type="entry name" value="Ribosomal_L13"/>
    <property type="match status" value="1"/>
</dbReference>
<dbReference type="FunFam" id="3.90.1180.10:FF:000001">
    <property type="entry name" value="50S ribosomal protein L13"/>
    <property type="match status" value="1"/>
</dbReference>
<dbReference type="Gene3D" id="3.90.1180.10">
    <property type="entry name" value="Ribosomal protein L13"/>
    <property type="match status" value="1"/>
</dbReference>
<dbReference type="HAMAP" id="MF_01366">
    <property type="entry name" value="Ribosomal_uL13"/>
    <property type="match status" value="1"/>
</dbReference>
<dbReference type="InterPro" id="IPR005822">
    <property type="entry name" value="Ribosomal_uL13"/>
</dbReference>
<dbReference type="InterPro" id="IPR005823">
    <property type="entry name" value="Ribosomal_uL13_bac-type"/>
</dbReference>
<dbReference type="InterPro" id="IPR036899">
    <property type="entry name" value="Ribosomal_uL13_sf"/>
</dbReference>
<dbReference type="NCBIfam" id="TIGR01066">
    <property type="entry name" value="rplM_bact"/>
    <property type="match status" value="1"/>
</dbReference>
<dbReference type="PANTHER" id="PTHR11545:SF2">
    <property type="entry name" value="LARGE RIBOSOMAL SUBUNIT PROTEIN UL13M"/>
    <property type="match status" value="1"/>
</dbReference>
<dbReference type="PANTHER" id="PTHR11545">
    <property type="entry name" value="RIBOSOMAL PROTEIN L13"/>
    <property type="match status" value="1"/>
</dbReference>
<dbReference type="Pfam" id="PF00572">
    <property type="entry name" value="Ribosomal_L13"/>
    <property type="match status" value="1"/>
</dbReference>
<dbReference type="PIRSF" id="PIRSF002181">
    <property type="entry name" value="Ribosomal_L13"/>
    <property type="match status" value="1"/>
</dbReference>
<dbReference type="SUPFAM" id="SSF52161">
    <property type="entry name" value="Ribosomal protein L13"/>
    <property type="match status" value="1"/>
</dbReference>
<reference key="1">
    <citation type="journal article" date="2006" name="Proc. Natl. Acad. Sci. U.S.A.">
        <title>Comparative genomics of the lactic acid bacteria.</title>
        <authorList>
            <person name="Makarova K.S."/>
            <person name="Slesarev A."/>
            <person name="Wolf Y.I."/>
            <person name="Sorokin A."/>
            <person name="Mirkin B."/>
            <person name="Koonin E.V."/>
            <person name="Pavlov A."/>
            <person name="Pavlova N."/>
            <person name="Karamychev V."/>
            <person name="Polouchine N."/>
            <person name="Shakhova V."/>
            <person name="Grigoriev I."/>
            <person name="Lou Y."/>
            <person name="Rohksar D."/>
            <person name="Lucas S."/>
            <person name="Huang K."/>
            <person name="Goodstein D.M."/>
            <person name="Hawkins T."/>
            <person name="Plengvidhya V."/>
            <person name="Welker D."/>
            <person name="Hughes J."/>
            <person name="Goh Y."/>
            <person name="Benson A."/>
            <person name="Baldwin K."/>
            <person name="Lee J.-H."/>
            <person name="Diaz-Muniz I."/>
            <person name="Dosti B."/>
            <person name="Smeianov V."/>
            <person name="Wechter W."/>
            <person name="Barabote R."/>
            <person name="Lorca G."/>
            <person name="Altermann E."/>
            <person name="Barrangou R."/>
            <person name="Ganesan B."/>
            <person name="Xie Y."/>
            <person name="Rawsthorne H."/>
            <person name="Tamir D."/>
            <person name="Parker C."/>
            <person name="Breidt F."/>
            <person name="Broadbent J.R."/>
            <person name="Hutkins R."/>
            <person name="O'Sullivan D."/>
            <person name="Steele J."/>
            <person name="Unlu G."/>
            <person name="Saier M.H. Jr."/>
            <person name="Klaenhammer T."/>
            <person name="Richardson P."/>
            <person name="Kozyavkin S."/>
            <person name="Weimer B.C."/>
            <person name="Mills D.A."/>
        </authorList>
    </citation>
    <scope>NUCLEOTIDE SEQUENCE [LARGE SCALE GENOMIC DNA]</scope>
    <source>
        <strain>ATCC 8293 / DSM 20343 / BCRC 11652 / CCM 1803 / JCM 6124 / NCDO 523 / NBRC 100496 / NCIMB 8023 / NCTC 12954 / NRRL B-1118 / 37Y</strain>
    </source>
</reference>
<organism>
    <name type="scientific">Leuconostoc mesenteroides subsp. mesenteroides (strain ATCC 8293 / DSM 20343 / BCRC 11652 / CCM 1803 / JCM 6124 / NCDO 523 / NBRC 100496 / NCIMB 8023 / NCTC 12954 / NRRL B-1118 / 37Y)</name>
    <dbReference type="NCBI Taxonomy" id="203120"/>
    <lineage>
        <taxon>Bacteria</taxon>
        <taxon>Bacillati</taxon>
        <taxon>Bacillota</taxon>
        <taxon>Bacilli</taxon>
        <taxon>Lactobacillales</taxon>
        <taxon>Lactobacillaceae</taxon>
        <taxon>Leuconostoc</taxon>
    </lineage>
</organism>